<sequence length="139" mass="15344">MRADREELDFLPPVGGMAVDVMEVELPATRRAFMLVLVQTAAVLAAIHGMHLMNELYLTSFDEKFQWKIEAWRLYLALYYVVCIGMTIFCLDGGHADEPSREASPDLGAAGAELEDESAQAGAVQGPETLRSQVLRART</sequence>
<evidence type="ECO:0000256" key="1">
    <source>
        <dbReference type="SAM" id="MobiDB-lite"/>
    </source>
</evidence>
<feature type="chain" id="PRO_0000221688" description="Probable DNA-binding protein">
    <location>
        <begin position="1"/>
        <end position="139"/>
    </location>
</feature>
<feature type="region of interest" description="Disordered" evidence="1">
    <location>
        <begin position="97"/>
        <end position="139"/>
    </location>
</feature>
<protein>
    <recommendedName>
        <fullName>Probable DNA-binding protein</fullName>
    </recommendedName>
    <alternativeName>
        <fullName>Agnoprotein</fullName>
    </alternativeName>
</protein>
<organismHost>
    <name type="scientific">Homo sapiens</name>
    <name type="common">Human</name>
    <dbReference type="NCBI Taxonomy" id="9606"/>
</organismHost>
<name>DNBI_ADE07</name>
<keyword id="KW-0238">DNA-binding</keyword>
<dbReference type="EMBL" id="X03000">
    <property type="status" value="NOT_ANNOTATED_CDS"/>
    <property type="molecule type" value="Genomic_DNA"/>
</dbReference>
<dbReference type="SMR" id="P05662"/>
<dbReference type="GO" id="GO:0003677">
    <property type="term" value="F:DNA binding"/>
    <property type="evidence" value="ECO:0007669"/>
    <property type="project" value="UniProtKB-KW"/>
</dbReference>
<dbReference type="InterPro" id="IPR004292">
    <property type="entry name" value="L1-like"/>
</dbReference>
<dbReference type="Pfam" id="PF03052">
    <property type="entry name" value="Adeno_52K"/>
    <property type="match status" value="1"/>
</dbReference>
<proteinExistence type="predicted"/>
<organism>
    <name type="scientific">Human adenovirus B serotype 7</name>
    <name type="common">HAdV-7</name>
    <name type="synonym">Human adenovirus 7</name>
    <dbReference type="NCBI Taxonomy" id="10519"/>
    <lineage>
        <taxon>Viruses</taxon>
        <taxon>Varidnaviria</taxon>
        <taxon>Bamfordvirae</taxon>
        <taxon>Preplasmiviricota</taxon>
        <taxon>Tectiliviricetes</taxon>
        <taxon>Rowavirales</taxon>
        <taxon>Adenoviridae</taxon>
        <taxon>Mastadenovirus</taxon>
        <taxon>Human mastadenovirus B</taxon>
    </lineage>
</organism>
<accession>P05662</accession>
<reference key="1">
    <citation type="journal article" date="1983" name="Gene">
        <title>The nucleotide sequence of the genes encoded in early region 2b of human adenovirus type 7.</title>
        <authorList>
            <person name="Engler J.A."/>
            <person name="Hoppe M.S."/>
            <person name="van Bree M.P."/>
        </authorList>
    </citation>
    <scope>NUCLEOTIDE SEQUENCE [GENOMIC DNA]</scope>
</reference>